<gene>
    <name type="ordered locus">TP_0447</name>
</gene>
<proteinExistence type="inferred from homology"/>
<sequence>MNNLIKAYAAGVMSAAFLFGSEGRVRSESDRVRGEDPWHLLQWAQVVYEREEFGDTLRYAQRARALRREQVEHQCRVLLRARTRAESAGIPETLSDLYALLKSRGETDACEVLDAIFLTHAPHVFQNSVSKLLQWLKDSAAFPEAELLLGKVFEGEGEYAQALQHYRNAWDTRAQLVVPDARFDIIYAMANVSRLLSQQDEREKYLLLVLSEDPLYSAREVWGKTLHAMLRTIRSSNTVEKFFKLYRHRNVLALRAYQELTEMYVRTDNIERALPVSVLAADIAISALDSFLQKIELTYQYKDLADLFLRTGSHPTILKWANEHGVWQTLLHFADLLYKKGLHAQARDMYYNLAEKCPAFEYARRAAYKLSLTL</sequence>
<name>Y447_TREPA</name>
<dbReference type="EMBL" id="AE000520">
    <property type="protein sequence ID" value="AAC65436.1"/>
    <property type="molecule type" value="Genomic_DNA"/>
</dbReference>
<dbReference type="PIR" id="G71324">
    <property type="entry name" value="G71324"/>
</dbReference>
<dbReference type="RefSeq" id="WP_010881895.1">
    <property type="nucleotide sequence ID" value="NC_021490.2"/>
</dbReference>
<dbReference type="SMR" id="O83461"/>
<dbReference type="STRING" id="243276.TP_0447"/>
<dbReference type="EnsemblBacteria" id="AAC65436">
    <property type="protein sequence ID" value="AAC65436"/>
    <property type="gene ID" value="TP_0447"/>
</dbReference>
<dbReference type="KEGG" id="tpa:TP_0447"/>
<dbReference type="KEGG" id="tpw:TPANIC_0447"/>
<dbReference type="eggNOG" id="COG3118">
    <property type="taxonomic scope" value="Bacteria"/>
</dbReference>
<dbReference type="HOGENOM" id="CLU_063467_0_0_12"/>
<dbReference type="OrthoDB" id="356136at2"/>
<dbReference type="Proteomes" id="UP000000811">
    <property type="component" value="Chromosome"/>
</dbReference>
<dbReference type="Gene3D" id="1.25.40.10">
    <property type="entry name" value="Tetratricopeptide repeat domain"/>
    <property type="match status" value="1"/>
</dbReference>
<dbReference type="InterPro" id="IPR011990">
    <property type="entry name" value="TPR-like_helical_dom_sf"/>
</dbReference>
<evidence type="ECO:0000255" key="1"/>
<feature type="signal peptide" evidence="1">
    <location>
        <begin position="1"/>
        <end position="26"/>
    </location>
</feature>
<feature type="chain" id="PRO_0000014248" description="Uncharacterized protein TP_0447">
    <location>
        <begin position="27"/>
        <end position="374"/>
    </location>
</feature>
<accession>O83461</accession>
<reference key="1">
    <citation type="journal article" date="1998" name="Science">
        <title>Complete genome sequence of Treponema pallidum, the syphilis spirochete.</title>
        <authorList>
            <person name="Fraser C.M."/>
            <person name="Norris S.J."/>
            <person name="Weinstock G.M."/>
            <person name="White O."/>
            <person name="Sutton G.G."/>
            <person name="Dodson R.J."/>
            <person name="Gwinn M.L."/>
            <person name="Hickey E.K."/>
            <person name="Clayton R.A."/>
            <person name="Ketchum K.A."/>
            <person name="Sodergren E."/>
            <person name="Hardham J.M."/>
            <person name="McLeod M.P."/>
            <person name="Salzberg S.L."/>
            <person name="Peterson J.D."/>
            <person name="Khalak H.G."/>
            <person name="Richardson D.L."/>
            <person name="Howell J.K."/>
            <person name="Chidambaram M."/>
            <person name="Utterback T.R."/>
            <person name="McDonald L.A."/>
            <person name="Artiach P."/>
            <person name="Bowman C."/>
            <person name="Cotton M.D."/>
            <person name="Fujii C."/>
            <person name="Garland S.A."/>
            <person name="Hatch B."/>
            <person name="Horst K."/>
            <person name="Roberts K.M."/>
            <person name="Sandusky M."/>
            <person name="Weidman J.F."/>
            <person name="Smith H.O."/>
            <person name="Venter J.C."/>
        </authorList>
    </citation>
    <scope>NUCLEOTIDE SEQUENCE [LARGE SCALE GENOMIC DNA]</scope>
    <source>
        <strain>Nichols</strain>
    </source>
</reference>
<keyword id="KW-1185">Reference proteome</keyword>
<keyword id="KW-0732">Signal</keyword>
<organism>
    <name type="scientific">Treponema pallidum (strain Nichols)</name>
    <dbReference type="NCBI Taxonomy" id="243276"/>
    <lineage>
        <taxon>Bacteria</taxon>
        <taxon>Pseudomonadati</taxon>
        <taxon>Spirochaetota</taxon>
        <taxon>Spirochaetia</taxon>
        <taxon>Spirochaetales</taxon>
        <taxon>Treponemataceae</taxon>
        <taxon>Treponema</taxon>
    </lineage>
</organism>
<protein>
    <recommendedName>
        <fullName>Uncharacterized protein TP_0447</fullName>
    </recommendedName>
</protein>